<protein>
    <recommendedName>
        <fullName>Ribonuclease R</fullName>
        <shortName>RNase R</shortName>
        <ecNumber>3.1.13.1</ecNumber>
    </recommendedName>
    <alternativeName>
        <fullName>VacB protein homolog</fullName>
    </alternativeName>
</protein>
<dbReference type="EC" id="3.1.13.1"/>
<dbReference type="EMBL" id="X57324">
    <property type="protein sequence ID" value="CAA40595.1"/>
    <property type="status" value="ALT_FRAME"/>
    <property type="molecule type" value="Genomic_DNA"/>
</dbReference>
<dbReference type="PIR" id="S23260">
    <property type="entry name" value="S23260"/>
</dbReference>
<dbReference type="SMR" id="P54084"/>
<dbReference type="GO" id="GO:0005829">
    <property type="term" value="C:cytosol"/>
    <property type="evidence" value="ECO:0007669"/>
    <property type="project" value="UniProtKB-ARBA"/>
</dbReference>
<dbReference type="GO" id="GO:0008859">
    <property type="term" value="F:exoribonuclease II activity"/>
    <property type="evidence" value="ECO:0007669"/>
    <property type="project" value="UniProtKB-EC"/>
</dbReference>
<dbReference type="GO" id="GO:0003723">
    <property type="term" value="F:RNA binding"/>
    <property type="evidence" value="ECO:0007669"/>
    <property type="project" value="UniProtKB-KW"/>
</dbReference>
<dbReference type="GO" id="GO:0006402">
    <property type="term" value="P:mRNA catabolic process"/>
    <property type="evidence" value="ECO:0007669"/>
    <property type="project" value="TreeGrafter"/>
</dbReference>
<dbReference type="FunFam" id="2.40.50.140:FF:000213">
    <property type="entry name" value="Ribonuclease R"/>
    <property type="match status" value="1"/>
</dbReference>
<dbReference type="Gene3D" id="2.40.50.140">
    <property type="entry name" value="Nucleic acid-binding proteins"/>
    <property type="match status" value="1"/>
</dbReference>
<dbReference type="InterPro" id="IPR011129">
    <property type="entry name" value="CSD"/>
</dbReference>
<dbReference type="InterPro" id="IPR040476">
    <property type="entry name" value="CSD2"/>
</dbReference>
<dbReference type="InterPro" id="IPR012340">
    <property type="entry name" value="NA-bd_OB-fold"/>
</dbReference>
<dbReference type="InterPro" id="IPR013223">
    <property type="entry name" value="RNase_B_OB_dom"/>
</dbReference>
<dbReference type="InterPro" id="IPR001900">
    <property type="entry name" value="RNase_II/R"/>
</dbReference>
<dbReference type="InterPro" id="IPR004476">
    <property type="entry name" value="RNase_II/RNase_R"/>
</dbReference>
<dbReference type="InterPro" id="IPR013668">
    <property type="entry name" value="RNase_R_HTH_12"/>
</dbReference>
<dbReference type="InterPro" id="IPR050180">
    <property type="entry name" value="RNR_Ribonuclease"/>
</dbReference>
<dbReference type="NCBIfam" id="TIGR00358">
    <property type="entry name" value="3_prime_RNase"/>
    <property type="match status" value="1"/>
</dbReference>
<dbReference type="PANTHER" id="PTHR23355:SF9">
    <property type="entry name" value="DIS3-LIKE EXONUCLEASE 2"/>
    <property type="match status" value="1"/>
</dbReference>
<dbReference type="PANTHER" id="PTHR23355">
    <property type="entry name" value="RIBONUCLEASE"/>
    <property type="match status" value="1"/>
</dbReference>
<dbReference type="Pfam" id="PF17876">
    <property type="entry name" value="CSD2"/>
    <property type="match status" value="1"/>
</dbReference>
<dbReference type="Pfam" id="PF08461">
    <property type="entry name" value="HTH_12"/>
    <property type="match status" value="1"/>
</dbReference>
<dbReference type="Pfam" id="PF08206">
    <property type="entry name" value="OB_RNB"/>
    <property type="match status" value="1"/>
</dbReference>
<dbReference type="Pfam" id="PF00773">
    <property type="entry name" value="RNB"/>
    <property type="match status" value="1"/>
</dbReference>
<dbReference type="SMART" id="SM00357">
    <property type="entry name" value="CSP"/>
    <property type="match status" value="1"/>
</dbReference>
<dbReference type="SMART" id="SM00955">
    <property type="entry name" value="RNB"/>
    <property type="match status" value="1"/>
</dbReference>
<dbReference type="SUPFAM" id="SSF50249">
    <property type="entry name" value="Nucleic acid-binding proteins"/>
    <property type="match status" value="2"/>
</dbReference>
<sequence length="439" mass="49332">MPETQEPASLNERDPMFEREKEKYERPIVSREYILSYLEGTGRPLTLEDIIAELEVAEDDQEALRRRLRAMERDGQLVRNRRGAYGIVAAMELVRGTVSAHPDGFGFLIPEAGGKDLFLSPREMRKVFHGDTILGRAVGEDRRGRIEGAVVRILERALKHIVGRYYADNGVHYVVPEDRRIPQEFAVVEGEGEGLTPVHGQIVILEITQYPDGRNMPQGHVVEILGEHMAPGMEVEIAVRNYGLPHQWPDEVLAEIKQFSETVPETMKAGRRDLRDLPLVTIDGADAKDFDDAVYAEVIENGFRLTVAIADVATYVCPDSALDREAVTRGNSVYFPRRVIPMLPEILSNGLCSLNPHVDRLCMFCEMEMDAAGRSTGFRFDRGIIGSQRRFTYDEVAAILAGDAELRAQDAAMVPHLEALHSLYESFAKARERRGTIEF</sequence>
<keyword id="KW-0963">Cytoplasm</keyword>
<keyword id="KW-0269">Exonuclease</keyword>
<keyword id="KW-0378">Hydrolase</keyword>
<keyword id="KW-0540">Nuclease</keyword>
<keyword id="KW-0694">RNA-binding</keyword>
<organism>
    <name type="scientific">Acidithiobacillus ferrooxidans</name>
    <name type="common">Thiobacillus ferrooxidans</name>
    <dbReference type="NCBI Taxonomy" id="920"/>
    <lineage>
        <taxon>Bacteria</taxon>
        <taxon>Pseudomonadati</taxon>
        <taxon>Pseudomonadota</taxon>
        <taxon>Acidithiobacillia</taxon>
        <taxon>Acidithiobacillales</taxon>
        <taxon>Acidithiobacillaceae</taxon>
        <taxon>Acidithiobacillus</taxon>
    </lineage>
</organism>
<feature type="chain" id="PRO_0000166413" description="Ribonuclease R">
    <location>
        <begin position="1"/>
        <end position="439" status="greater than"/>
    </location>
</feature>
<feature type="domain" description="RNB" evidence="2">
    <location>
        <begin position="271"/>
        <end position="439"/>
    </location>
</feature>
<feature type="region of interest" description="Disordered" evidence="3">
    <location>
        <begin position="1"/>
        <end position="22"/>
    </location>
</feature>
<feature type="compositionally biased region" description="Basic and acidic residues" evidence="3">
    <location>
        <begin position="11"/>
        <end position="22"/>
    </location>
</feature>
<feature type="non-terminal residue">
    <location>
        <position position="439"/>
    </location>
</feature>
<name>RNR_ACIFR</name>
<reference key="1">
    <citation type="journal article" date="1992" name="J. Biol. Chem.">
        <title>Molecular cloning of the gene encoding Thiobacillus ferrooxidans Fe(II) oxidase. High homology of the gene product with HiPIP.</title>
        <authorList>
            <person name="Kusano T."/>
            <person name="Takeshima T."/>
            <person name="Sugawara K."/>
            <person name="Inoue C."/>
            <person name="Shiratori T."/>
            <person name="Yano T."/>
            <person name="Fukumori Y."/>
            <person name="Yamanaka T."/>
        </authorList>
    </citation>
    <scope>NUCLEOTIDE SEQUENCE [GENOMIC DNA]</scope>
    <source>
        <strain>Fe1</strain>
    </source>
</reference>
<evidence type="ECO:0000250" key="1"/>
<evidence type="ECO:0000255" key="2"/>
<evidence type="ECO:0000256" key="3">
    <source>
        <dbReference type="SAM" id="MobiDB-lite"/>
    </source>
</evidence>
<evidence type="ECO:0000305" key="4"/>
<proteinExistence type="inferred from homology"/>
<gene>
    <name type="primary">rnr</name>
    <name type="synonym">vacB</name>
</gene>
<comment type="function">
    <text evidence="1">3'-5' exoribonuclease that releases 5'-nucleoside monophosphates and is involved in maturation of structured RNAs.</text>
</comment>
<comment type="catalytic activity">
    <reaction>
        <text>Exonucleolytic cleavage in the 3'- to 5'-direction to yield nucleoside 5'-phosphates.</text>
        <dbReference type="EC" id="3.1.13.1"/>
    </reaction>
</comment>
<comment type="subcellular location">
    <subcellularLocation>
        <location evidence="4">Cytoplasm</location>
    </subcellularLocation>
</comment>
<comment type="similarity">
    <text evidence="4">Belongs to the RNR ribonuclease family. RNase R subfamily.</text>
</comment>
<comment type="sequence caution" evidence="4">
    <conflict type="frameshift">
        <sequence resource="EMBL-CDS" id="CAA40595"/>
    </conflict>
</comment>
<accession>P54084</accession>